<sequence>AAAPDIPIANVNA</sequence>
<protein>
    <recommendedName>
        <fullName>Beta-lactamase</fullName>
        <ecNumber>3.5.2.6</ecNumber>
    </recommendedName>
</protein>
<name>BLAC_STRGR</name>
<comment type="catalytic activity">
    <reaction evidence="1">
        <text>a beta-lactam + H2O = a substituted beta-amino acid</text>
        <dbReference type="Rhea" id="RHEA:20401"/>
        <dbReference type="ChEBI" id="CHEBI:15377"/>
        <dbReference type="ChEBI" id="CHEBI:35627"/>
        <dbReference type="ChEBI" id="CHEBI:140347"/>
        <dbReference type="EC" id="3.5.2.6"/>
    </reaction>
</comment>
<comment type="subcellular location">
    <subcellularLocation>
        <location>Secreted</location>
    </subcellularLocation>
    <subcellularLocation>
        <location>Membrane</location>
    </subcellularLocation>
</comment>
<comment type="miscellaneous">
    <text evidence="3">The class A beta-lactamase family has a specific amino-acid numbering system, sometimes called Ambler or ABL numbering and often misspelt as Amber. A multiple sequence alignment was used to derive a consensus sequence and then the consensus was numbered taking into account insertions and deletions. This allows use of identical numbers, e.g. for active site residues, despite differences in protein length. UniProt always uses natural numbering of residues, hence there appear to be differences in numbering between this entry and some papers.</text>
</comment>
<comment type="similarity">
    <text evidence="2">Belongs to the class-A beta-lactamase family.</text>
</comment>
<reference key="1">
    <citation type="journal article" date="1998" name="Microbiology">
        <title>Membrane-bound and extracellular beta-lactamase production with developmental regulation in Streptomyces griseus NRRL B-2682.</title>
        <authorList>
            <person name="Deak E."/>
            <person name="Szabo I."/>
            <person name="Kalmanczhelyi A."/>
            <person name="Gal Z."/>
            <person name="Barabas G."/>
            <person name="Panyige A."/>
        </authorList>
    </citation>
    <scope>PROTEIN SEQUENCE</scope>
    <source>
        <strain>ATCC 23345 / DSM 40236 / JCM 4644 / NBRC 12875 / NCIMB 13023 / NRRL B-2682 / VKM Ac-800 / IMRU 3463</strain>
    </source>
</reference>
<reference key="2">
    <citation type="journal article" date="1991" name="Biochem. J.">
        <title>A standard numbering scheme for the class A beta-lactamases.</title>
        <authorList>
            <person name="Ambler R.P."/>
            <person name="Coulson A.F."/>
            <person name="Frere J.M."/>
            <person name="Ghuysen J.M."/>
            <person name="Joris B."/>
            <person name="Forsman M."/>
            <person name="Levesque R.C."/>
            <person name="Tiraby G."/>
            <person name="Waley S.G."/>
        </authorList>
    </citation>
    <scope>AMINO ACID NUMBERING SCHEME</scope>
</reference>
<keyword id="KW-0046">Antibiotic resistance</keyword>
<keyword id="KW-0903">Direct protein sequencing</keyword>
<keyword id="KW-0378">Hydrolase</keyword>
<keyword id="KW-0472">Membrane</keyword>
<keyword id="KW-0964">Secreted</keyword>
<evidence type="ECO:0000255" key="1">
    <source>
        <dbReference type="PROSITE-ProRule" id="PRU10101"/>
    </source>
</evidence>
<evidence type="ECO:0000305" key="2"/>
<evidence type="ECO:0000305" key="3">
    <source>
    </source>
</evidence>
<organism>
    <name type="scientific">Streptomyces griseus</name>
    <dbReference type="NCBI Taxonomy" id="1911"/>
    <lineage>
        <taxon>Bacteria</taxon>
        <taxon>Bacillati</taxon>
        <taxon>Actinomycetota</taxon>
        <taxon>Actinomycetes</taxon>
        <taxon>Kitasatosporales</taxon>
        <taxon>Streptomycetaceae</taxon>
        <taxon>Streptomyces</taxon>
    </lineage>
</organism>
<feature type="chain" id="PRO_0000195442" description="Beta-lactamase">
    <location>
        <begin position="1"/>
        <end position="13" status="greater than"/>
    </location>
</feature>
<feature type="non-terminal residue">
    <location>
        <position position="13"/>
    </location>
</feature>
<accession>P81173</accession>
<proteinExistence type="evidence at protein level"/>
<dbReference type="EC" id="3.5.2.6"/>
<dbReference type="GO" id="GO:0005576">
    <property type="term" value="C:extracellular region"/>
    <property type="evidence" value="ECO:0007669"/>
    <property type="project" value="UniProtKB-SubCell"/>
</dbReference>
<dbReference type="GO" id="GO:0016020">
    <property type="term" value="C:membrane"/>
    <property type="evidence" value="ECO:0007669"/>
    <property type="project" value="UniProtKB-SubCell"/>
</dbReference>
<dbReference type="GO" id="GO:0008800">
    <property type="term" value="F:beta-lactamase activity"/>
    <property type="evidence" value="ECO:0007669"/>
    <property type="project" value="UniProtKB-EC"/>
</dbReference>
<dbReference type="GO" id="GO:0046677">
    <property type="term" value="P:response to antibiotic"/>
    <property type="evidence" value="ECO:0007669"/>
    <property type="project" value="UniProtKB-KW"/>
</dbReference>